<gene>
    <name type="ordered locus">MIMI_R746</name>
</gene>
<feature type="chain" id="PRO_0000071344" description="Uncharacterized protein R746">
    <location>
        <begin position="1"/>
        <end position="215"/>
    </location>
</feature>
<organismHost>
    <name type="scientific">Acanthamoeba polyphaga</name>
    <name type="common">Amoeba</name>
    <dbReference type="NCBI Taxonomy" id="5757"/>
</organismHost>
<dbReference type="EMBL" id="AY653733">
    <property type="protein sequence ID" value="AAV51006.1"/>
    <property type="molecule type" value="Genomic_DNA"/>
</dbReference>
<dbReference type="KEGG" id="vg:9925403"/>
<dbReference type="OrthoDB" id="35046at10239"/>
<dbReference type="Proteomes" id="UP000001134">
    <property type="component" value="Genome"/>
</dbReference>
<reference key="1">
    <citation type="journal article" date="2004" name="Science">
        <title>The 1.2-megabase genome sequence of Mimivirus.</title>
        <authorList>
            <person name="Raoult D."/>
            <person name="Audic S."/>
            <person name="Robert C."/>
            <person name="Abergel C."/>
            <person name="Renesto P."/>
            <person name="Ogata H."/>
            <person name="La Scola B."/>
            <person name="Susan M."/>
            <person name="Claverie J.-M."/>
        </authorList>
    </citation>
    <scope>NUCLEOTIDE SEQUENCE [LARGE SCALE GENOMIC DNA]</scope>
    <source>
        <strain>Rowbotham-Bradford</strain>
    </source>
</reference>
<keyword id="KW-1185">Reference proteome</keyword>
<sequence>MAAAIVAVRINNSNSDEERERRHYQSRKIMDQTDDEVRIASQINNQYAPTKTGMGYMWYKLNCKYGVCIPNFKVIHAGYKLNQIYQSLEETVRFYIGRKQNIDLLIYQIKGIDPSLASYNIVTSSSNPCVFLKIRPKCDNLFWMKGNDSFIKIIYQKINFMAMYQEYRKQLIYLTKQDLTRLYIETFNKKSPKIFSMSRMRSRLLNYKLNKLLTE</sequence>
<accession>Q5UNZ9</accession>
<organism>
    <name type="scientific">Acanthamoeba polyphaga mimivirus</name>
    <name type="common">APMV</name>
    <dbReference type="NCBI Taxonomy" id="212035"/>
    <lineage>
        <taxon>Viruses</taxon>
        <taxon>Varidnaviria</taxon>
        <taxon>Bamfordvirae</taxon>
        <taxon>Nucleocytoviricota</taxon>
        <taxon>Megaviricetes</taxon>
        <taxon>Imitervirales</taxon>
        <taxon>Mimiviridae</taxon>
        <taxon>Megamimivirinae</taxon>
        <taxon>Mimivirus</taxon>
        <taxon>Mimivirus bradfordmassiliense</taxon>
    </lineage>
</organism>
<name>YR746_MIMIV</name>
<proteinExistence type="predicted"/>
<protein>
    <recommendedName>
        <fullName>Uncharacterized protein R746</fullName>
    </recommendedName>
</protein>